<organism>
    <name type="scientific">Salmonella typhimurium (strain LT2 / SGSC1412 / ATCC 700720)</name>
    <dbReference type="NCBI Taxonomy" id="99287"/>
    <lineage>
        <taxon>Bacteria</taxon>
        <taxon>Pseudomonadati</taxon>
        <taxon>Pseudomonadota</taxon>
        <taxon>Gammaproteobacteria</taxon>
        <taxon>Enterobacterales</taxon>
        <taxon>Enterobacteriaceae</taxon>
        <taxon>Salmonella</taxon>
    </lineage>
</organism>
<dbReference type="EMBL" id="U69493">
    <property type="protein sequence ID" value="AAB39644.1"/>
    <property type="molecule type" value="Genomic_DNA"/>
</dbReference>
<dbReference type="EMBL" id="AE006468">
    <property type="protein sequence ID" value="AAL19383.1"/>
    <property type="molecule type" value="Genomic_DNA"/>
</dbReference>
<dbReference type="PIR" id="T46949">
    <property type="entry name" value="T46949"/>
</dbReference>
<dbReference type="RefSeq" id="NP_459424.1">
    <property type="nucleotide sequence ID" value="NC_003197.2"/>
</dbReference>
<dbReference type="RefSeq" id="WP_000778012.1">
    <property type="nucleotide sequence ID" value="NC_003197.2"/>
</dbReference>
<dbReference type="PDB" id="4R6Y">
    <property type="method" value="X-ray"/>
    <property type="resolution" value="1.22 A"/>
    <property type="chains" value="A=22-337"/>
</dbReference>
<dbReference type="PDBsum" id="4R6Y"/>
<dbReference type="SMR" id="P96062"/>
<dbReference type="STRING" id="99287.STM0429"/>
<dbReference type="TCDB" id="3.A.1.11.5">
    <property type="family name" value="the atp-binding cassette (abc) superfamily"/>
</dbReference>
<dbReference type="PaxDb" id="99287-STM0429"/>
<dbReference type="GeneID" id="1251948"/>
<dbReference type="KEGG" id="stm:STM0429"/>
<dbReference type="PATRIC" id="fig|99287.12.peg.458"/>
<dbReference type="HOGENOM" id="CLU_026974_3_2_6"/>
<dbReference type="OMA" id="WHKVTDS"/>
<dbReference type="PhylomeDB" id="P96062"/>
<dbReference type="BioCyc" id="SENT99287:STM0429-MONOMER"/>
<dbReference type="EvolutionaryTrace" id="P96062"/>
<dbReference type="Proteomes" id="UP000001014">
    <property type="component" value="Chromosome"/>
</dbReference>
<dbReference type="GO" id="GO:0030288">
    <property type="term" value="C:outer membrane-bounded periplasmic space"/>
    <property type="evidence" value="ECO:0000318"/>
    <property type="project" value="GO_Central"/>
</dbReference>
<dbReference type="GO" id="GO:0030975">
    <property type="term" value="F:thiamine binding"/>
    <property type="evidence" value="ECO:0000318"/>
    <property type="project" value="GO_Central"/>
</dbReference>
<dbReference type="GO" id="GO:0030976">
    <property type="term" value="F:thiamine pyrophosphate binding"/>
    <property type="evidence" value="ECO:0000318"/>
    <property type="project" value="GO_Central"/>
</dbReference>
<dbReference type="GO" id="GO:0015888">
    <property type="term" value="P:thiamine transport"/>
    <property type="evidence" value="ECO:0000318"/>
    <property type="project" value="GO_Central"/>
</dbReference>
<dbReference type="Gene3D" id="3.40.190.10">
    <property type="entry name" value="Periplasmic binding protein-like II"/>
    <property type="match status" value="2"/>
</dbReference>
<dbReference type="InterPro" id="IPR017637">
    <property type="entry name" value="AminoethylPonate_ABC-bd"/>
</dbReference>
<dbReference type="InterPro" id="IPR006059">
    <property type="entry name" value="SBP"/>
</dbReference>
<dbReference type="NCBIfam" id="TIGR03227">
    <property type="entry name" value="PhnS"/>
    <property type="match status" value="1"/>
</dbReference>
<dbReference type="NCBIfam" id="NF011620">
    <property type="entry name" value="PRK15046.1"/>
    <property type="match status" value="1"/>
</dbReference>
<dbReference type="PANTHER" id="PTHR30006:SF3">
    <property type="entry name" value="THIAMINE-BINDING PERIPLASMIC PROTEIN"/>
    <property type="match status" value="1"/>
</dbReference>
<dbReference type="PANTHER" id="PTHR30006">
    <property type="entry name" value="THIAMINE-BINDING PERIPLASMIC PROTEIN-RELATED"/>
    <property type="match status" value="1"/>
</dbReference>
<dbReference type="Pfam" id="PF01547">
    <property type="entry name" value="SBP_bac_1"/>
    <property type="match status" value="1"/>
</dbReference>
<dbReference type="SUPFAM" id="SSF53850">
    <property type="entry name" value="Periplasmic binding protein-like II"/>
    <property type="match status" value="1"/>
</dbReference>
<keyword id="KW-0002">3D-structure</keyword>
<keyword id="KW-0574">Periplasm</keyword>
<keyword id="KW-1185">Reference proteome</keyword>
<keyword id="KW-0732">Signal</keyword>
<keyword id="KW-0813">Transport</keyword>
<reference key="1">
    <citation type="submission" date="1996-09" db="EMBL/GenBank/DDBJ databases">
        <title>Molecular genetic analysis of the Salmonella typhimurium LT2 phnXWRSTUV locus required for 2-aminoethylphosphonate transport and metabolism.</title>
        <authorList>
            <person name="Metcalf W.W."/>
            <person name="Jiang W."/>
            <person name="Wanner B.L."/>
        </authorList>
    </citation>
    <scope>NUCLEOTIDE SEQUENCE [GENOMIC DNA]</scope>
    <source>
        <strain>LT2</strain>
    </source>
</reference>
<reference key="2">
    <citation type="journal article" date="2001" name="Nature">
        <title>Complete genome sequence of Salmonella enterica serovar Typhimurium LT2.</title>
        <authorList>
            <person name="McClelland M."/>
            <person name="Sanderson K.E."/>
            <person name="Spieth J."/>
            <person name="Clifton S.W."/>
            <person name="Latreille P."/>
            <person name="Courtney L."/>
            <person name="Porwollik S."/>
            <person name="Ali J."/>
            <person name="Dante M."/>
            <person name="Du F."/>
            <person name="Hou S."/>
            <person name="Layman D."/>
            <person name="Leonard S."/>
            <person name="Nguyen C."/>
            <person name="Scott K."/>
            <person name="Holmes A."/>
            <person name="Grewal N."/>
            <person name="Mulvaney E."/>
            <person name="Ryan E."/>
            <person name="Sun H."/>
            <person name="Florea L."/>
            <person name="Miller W."/>
            <person name="Stoneking T."/>
            <person name="Nhan M."/>
            <person name="Waterston R."/>
            <person name="Wilson R.K."/>
        </authorList>
    </citation>
    <scope>NUCLEOTIDE SEQUENCE [LARGE SCALE GENOMIC DNA]</scope>
    <source>
        <strain>LT2 / SGSC1412 / ATCC 700720</strain>
    </source>
</reference>
<reference key="3">
    <citation type="journal article" date="1995" name="J. Bacteriol.">
        <title>Molecular cloning, mapping, and regulation of Pho regulon genes for phosphonate breakdown by the phosphonatase pathway of Salmonella typhimurium LT2.</title>
        <authorList>
            <person name="Jiang W."/>
            <person name="Metcalf W.W."/>
            <person name="Lee K.-S."/>
            <person name="Wanner B.L."/>
        </authorList>
    </citation>
    <scope>CLONING</scope>
    <scope>INDUCTION</scope>
    <source>
        <strain>LT2</strain>
    </source>
</reference>
<name>PHNS_SALTY</name>
<protein>
    <recommendedName>
        <fullName>Putative 2-aminoethylphosphonate-binding periplasmic protein</fullName>
    </recommendedName>
</protein>
<feature type="signal peptide" evidence="1">
    <location>
        <begin position="1"/>
        <end position="21"/>
    </location>
</feature>
<feature type="chain" id="PRO_0000287400" description="Putative 2-aminoethylphosphonate-binding periplasmic protein">
    <location>
        <begin position="22"/>
        <end position="337"/>
    </location>
</feature>
<feature type="strand" evidence="4">
    <location>
        <begin position="23"/>
        <end position="33"/>
    </location>
</feature>
<feature type="helix" evidence="4">
    <location>
        <begin position="40"/>
        <end position="52"/>
    </location>
</feature>
<feature type="strand" evidence="4">
    <location>
        <begin position="53"/>
        <end position="61"/>
    </location>
</feature>
<feature type="helix" evidence="4">
    <location>
        <begin position="63"/>
        <end position="72"/>
    </location>
</feature>
<feature type="turn" evidence="4">
    <location>
        <begin position="73"/>
        <end position="75"/>
    </location>
</feature>
<feature type="strand" evidence="4">
    <location>
        <begin position="80"/>
        <end position="84"/>
    </location>
</feature>
<feature type="helix" evidence="4">
    <location>
        <begin position="88"/>
        <end position="94"/>
    </location>
</feature>
<feature type="helix" evidence="4">
    <location>
        <begin position="106"/>
        <end position="108"/>
    </location>
</feature>
<feature type="strand" evidence="4">
    <location>
        <begin position="117"/>
        <end position="121"/>
    </location>
</feature>
<feature type="strand" evidence="4">
    <location>
        <begin position="123"/>
        <end position="129"/>
    </location>
</feature>
<feature type="turn" evidence="4">
    <location>
        <begin position="130"/>
        <end position="132"/>
    </location>
</feature>
<feature type="strand" evidence="4">
    <location>
        <begin position="133"/>
        <end position="135"/>
    </location>
</feature>
<feature type="helix" evidence="4">
    <location>
        <begin position="141"/>
        <end position="144"/>
    </location>
</feature>
<feature type="helix" evidence="4">
    <location>
        <begin position="146"/>
        <end position="148"/>
    </location>
</feature>
<feature type="strand" evidence="4">
    <location>
        <begin position="151"/>
        <end position="153"/>
    </location>
</feature>
<feature type="turn" evidence="4">
    <location>
        <begin position="157"/>
        <end position="159"/>
    </location>
</feature>
<feature type="helix" evidence="4">
    <location>
        <begin position="161"/>
        <end position="174"/>
    </location>
</feature>
<feature type="helix" evidence="4">
    <location>
        <begin position="177"/>
        <end position="187"/>
    </location>
</feature>
<feature type="turn" evidence="4">
    <location>
        <begin position="188"/>
        <end position="190"/>
    </location>
</feature>
<feature type="helix" evidence="4">
    <location>
        <begin position="201"/>
        <end position="206"/>
    </location>
</feature>
<feature type="strand" evidence="4">
    <location>
        <begin position="209"/>
        <end position="216"/>
    </location>
</feature>
<feature type="helix" evidence="4">
    <location>
        <begin position="217"/>
        <end position="223"/>
    </location>
</feature>
<feature type="turn" evidence="4">
    <location>
        <begin position="224"/>
        <end position="226"/>
    </location>
</feature>
<feature type="strand" evidence="4">
    <location>
        <begin position="230"/>
        <end position="233"/>
    </location>
</feature>
<feature type="strand" evidence="4">
    <location>
        <begin position="243"/>
        <end position="246"/>
    </location>
</feature>
<feature type="strand" evidence="4">
    <location>
        <begin position="249"/>
        <end position="254"/>
    </location>
</feature>
<feature type="helix" evidence="4">
    <location>
        <begin position="260"/>
        <end position="270"/>
    </location>
</feature>
<feature type="helix" evidence="4">
    <location>
        <begin position="273"/>
        <end position="276"/>
    </location>
</feature>
<feature type="helix" evidence="4">
    <location>
        <begin position="279"/>
        <end position="283"/>
    </location>
</feature>
<feature type="strand" evidence="4">
    <location>
        <begin position="286"/>
        <end position="288"/>
    </location>
</feature>
<feature type="helix" evidence="4">
    <location>
        <begin position="297"/>
        <end position="306"/>
    </location>
</feature>
<feature type="strand" evidence="4">
    <location>
        <begin position="310"/>
        <end position="312"/>
    </location>
</feature>
<feature type="helix" evidence="4">
    <location>
        <begin position="316"/>
        <end position="335"/>
    </location>
</feature>
<accession>P96062</accession>
<accession>Q7CR31</accession>
<comment type="function">
    <text>Probably part of the PhnSTUV complex (TC 3.A.1.11.5) involved in 2-aminoethylphosphonate import.</text>
</comment>
<comment type="subcellular location">
    <subcellularLocation>
        <location evidence="3">Periplasm</location>
    </subcellularLocation>
</comment>
<comment type="induction">
    <text evidence="2">Induced when inorganic phosphate is limiting; this is controlled by PhoB.</text>
</comment>
<comment type="miscellaneous">
    <text>Maps to a phosphate-starvation-inducible locus previously known as psiC.</text>
</comment>
<comment type="similarity">
    <text evidence="3">Belongs to the bacterial solute-binding protein 1 family.</text>
</comment>
<gene>
    <name type="primary">phnS</name>
    <name type="ordered locus">STM0429</name>
</gene>
<evidence type="ECO:0000255" key="1"/>
<evidence type="ECO:0000269" key="2">
    <source>
    </source>
</evidence>
<evidence type="ECO:0000305" key="3"/>
<evidence type="ECO:0007829" key="4">
    <source>
        <dbReference type="PDB" id="4R6Y"/>
    </source>
</evidence>
<sequence>MKLSRLALLSVFALASAPSWAESVVTVYSIDGLHDGDNSWYQVQFDAFTKATGITVRYVEGGGGVVVERLAKERTNPQADVLVTAPPFIQRAAAEKLLANFNTDTASAIPDANNLYSPLVKNYLSFIYNSKLLKTAPASWQDLLDGKFKNKLQYSTPGQAADGTAVMLQAFHSFGSKDAGFAYLGKLQANNVGPSASTGKLTALVNKGEIYVANGDLQMNLAQMERNPNVKIFWPANDKGERSALAIPYVIGLVQGAPQSENGKKLINFLLSKEAQTRVSELSWGMPVRSDVTPSDEHYKAATAALEGVQSWQPNWDDVAVSLSADISRWHKVTESE</sequence>
<proteinExistence type="evidence at protein level"/>